<organism>
    <name type="scientific">Bacillus mycoides (strain KBAB4)</name>
    <name type="common">Bacillus weihenstephanensis</name>
    <dbReference type="NCBI Taxonomy" id="315730"/>
    <lineage>
        <taxon>Bacteria</taxon>
        <taxon>Bacillati</taxon>
        <taxon>Bacillota</taxon>
        <taxon>Bacilli</taxon>
        <taxon>Bacillales</taxon>
        <taxon>Bacillaceae</taxon>
        <taxon>Bacillus</taxon>
        <taxon>Bacillus cereus group</taxon>
    </lineage>
</organism>
<name>TMCAL_BACMK</name>
<gene>
    <name evidence="1" type="primary">tmcAL</name>
    <name type="ordered locus">BcerKBAB4_3752</name>
</gene>
<keyword id="KW-0067">ATP-binding</keyword>
<keyword id="KW-0963">Cytoplasm</keyword>
<keyword id="KW-0436">Ligase</keyword>
<keyword id="KW-0547">Nucleotide-binding</keyword>
<keyword id="KW-0694">RNA-binding</keyword>
<keyword id="KW-0819">tRNA processing</keyword>
<keyword id="KW-0820">tRNA-binding</keyword>
<sequence>MQQTKKLTQSDIIIAVMSGPFLQRGEPALISKWYRTKMALTNGVDLVVELPYAFATQKAETFANGAISILNALGVSEICFGSEDGQAENFYNTIAIQKNEEETFNRLVKQFMNAGNSYAKATSEAFLHILPPEKNVDMSQPNNILGLQYIKAILLQNSSMQAQTIKRFASHYHDETFHDQHIASATSIRKQLFNENSSSTTIEPFIPKMTASLLENYKQNYGTLHNWEKYFSFFKYKLMTMSSEDLQHIYEMEEGLEHRILSKIQNSSSFYSFMEALKTKRYTWTRLQRACTHILTNTTKEEIHKANIEQHAPYIRLLGMSQKGQTYLSRNKKKIELPILTHTKTFEHPTLDIERKSNAVYFSIMQEPLRTQLLKQDATHHPIRYDEITKKFL</sequence>
<proteinExistence type="inferred from homology"/>
<protein>
    <recommendedName>
        <fullName evidence="1">tRNA(Met) cytidine acetate ligase</fullName>
        <ecNumber evidence="1">6.3.4.-</ecNumber>
    </recommendedName>
</protein>
<accession>A9VU87</accession>
<evidence type="ECO:0000255" key="1">
    <source>
        <dbReference type="HAMAP-Rule" id="MF_01539"/>
    </source>
</evidence>
<comment type="function">
    <text evidence="1">Catalyzes the formation of N(4)-acetylcytidine (ac(4)C) at the wobble position of elongator tRNA(Met), using acetate and ATP as substrates. First activates an acetate ion to form acetyladenylate (Ac-AMP) and then transfers the acetyl group to tRNA to form ac(4)C34.</text>
</comment>
<comment type="catalytic activity">
    <reaction evidence="1">
        <text>cytidine(34) in elongator tRNA(Met) + acetate + ATP = N(4)-acetylcytidine(34) in elongator tRNA(Met) + AMP + diphosphate</text>
        <dbReference type="Rhea" id="RHEA:58144"/>
        <dbReference type="Rhea" id="RHEA-COMP:10693"/>
        <dbReference type="Rhea" id="RHEA-COMP:10694"/>
        <dbReference type="ChEBI" id="CHEBI:30089"/>
        <dbReference type="ChEBI" id="CHEBI:30616"/>
        <dbReference type="ChEBI" id="CHEBI:33019"/>
        <dbReference type="ChEBI" id="CHEBI:74900"/>
        <dbReference type="ChEBI" id="CHEBI:82748"/>
        <dbReference type="ChEBI" id="CHEBI:456215"/>
    </reaction>
</comment>
<comment type="subcellular location">
    <subcellularLocation>
        <location evidence="1">Cytoplasm</location>
    </subcellularLocation>
</comment>
<comment type="similarity">
    <text evidence="1">Belongs to the TmcAL family.</text>
</comment>
<feature type="chain" id="PRO_1000198852" description="tRNA(Met) cytidine acetate ligase">
    <location>
        <begin position="1"/>
        <end position="393"/>
    </location>
</feature>
<feature type="binding site" evidence="1">
    <location>
        <position position="81"/>
    </location>
    <ligand>
        <name>ATP</name>
        <dbReference type="ChEBI" id="CHEBI:30616"/>
    </ligand>
</feature>
<feature type="binding site" evidence="1">
    <location>
        <position position="142"/>
    </location>
    <ligand>
        <name>ATP</name>
        <dbReference type="ChEBI" id="CHEBI:30616"/>
    </ligand>
</feature>
<feature type="binding site" evidence="1">
    <location>
        <position position="167"/>
    </location>
    <ligand>
        <name>ATP</name>
        <dbReference type="ChEBI" id="CHEBI:30616"/>
    </ligand>
</feature>
<reference key="1">
    <citation type="journal article" date="2008" name="Chem. Biol. Interact.">
        <title>Extending the Bacillus cereus group genomics to putative food-borne pathogens of different toxicity.</title>
        <authorList>
            <person name="Lapidus A."/>
            <person name="Goltsman E."/>
            <person name="Auger S."/>
            <person name="Galleron N."/>
            <person name="Segurens B."/>
            <person name="Dossat C."/>
            <person name="Land M.L."/>
            <person name="Broussolle V."/>
            <person name="Brillard J."/>
            <person name="Guinebretiere M.-H."/>
            <person name="Sanchis V."/>
            <person name="Nguen-the C."/>
            <person name="Lereclus D."/>
            <person name="Richardson P."/>
            <person name="Wincker P."/>
            <person name="Weissenbach J."/>
            <person name="Ehrlich S.D."/>
            <person name="Sorokin A."/>
        </authorList>
    </citation>
    <scope>NUCLEOTIDE SEQUENCE [LARGE SCALE GENOMIC DNA]</scope>
    <source>
        <strain>KBAB4</strain>
    </source>
</reference>
<dbReference type="EC" id="6.3.4.-" evidence="1"/>
<dbReference type="EMBL" id="CP000903">
    <property type="protein sequence ID" value="ABY44921.1"/>
    <property type="molecule type" value="Genomic_DNA"/>
</dbReference>
<dbReference type="SMR" id="A9VU87"/>
<dbReference type="KEGG" id="bwe:BcerKBAB4_3752"/>
<dbReference type="eggNOG" id="COG1323">
    <property type="taxonomic scope" value="Bacteria"/>
</dbReference>
<dbReference type="HOGENOM" id="CLU_038915_0_2_9"/>
<dbReference type="Proteomes" id="UP000002154">
    <property type="component" value="Chromosome"/>
</dbReference>
<dbReference type="GO" id="GO:0005737">
    <property type="term" value="C:cytoplasm"/>
    <property type="evidence" value="ECO:0007669"/>
    <property type="project" value="UniProtKB-SubCell"/>
</dbReference>
<dbReference type="GO" id="GO:0005524">
    <property type="term" value="F:ATP binding"/>
    <property type="evidence" value="ECO:0007669"/>
    <property type="project" value="UniProtKB-KW"/>
</dbReference>
<dbReference type="GO" id="GO:0016879">
    <property type="term" value="F:ligase activity, forming carbon-nitrogen bonds"/>
    <property type="evidence" value="ECO:0007669"/>
    <property type="project" value="UniProtKB-UniRule"/>
</dbReference>
<dbReference type="GO" id="GO:0000049">
    <property type="term" value="F:tRNA binding"/>
    <property type="evidence" value="ECO:0007669"/>
    <property type="project" value="UniProtKB-KW"/>
</dbReference>
<dbReference type="GO" id="GO:0006400">
    <property type="term" value="P:tRNA modification"/>
    <property type="evidence" value="ECO:0007669"/>
    <property type="project" value="UniProtKB-UniRule"/>
</dbReference>
<dbReference type="Gene3D" id="3.40.50.620">
    <property type="entry name" value="HUPs"/>
    <property type="match status" value="1"/>
</dbReference>
<dbReference type="HAMAP" id="MF_01539">
    <property type="entry name" value="TmcAL"/>
    <property type="match status" value="1"/>
</dbReference>
<dbReference type="InterPro" id="IPR014729">
    <property type="entry name" value="Rossmann-like_a/b/a_fold"/>
</dbReference>
<dbReference type="InterPro" id="IPR008513">
    <property type="entry name" value="tRNA(Met)_cyd_acetate_ligase"/>
</dbReference>
<dbReference type="NCBIfam" id="NF010191">
    <property type="entry name" value="PRK13670.1"/>
    <property type="match status" value="1"/>
</dbReference>
<dbReference type="PANTHER" id="PTHR37825">
    <property type="entry name" value="TRNA(MET) CYTIDINE ACETATE LIGASE"/>
    <property type="match status" value="1"/>
</dbReference>
<dbReference type="PANTHER" id="PTHR37825:SF1">
    <property type="entry name" value="TRNA(MET) CYTIDINE ACETATE LIGASE"/>
    <property type="match status" value="1"/>
</dbReference>
<dbReference type="Pfam" id="PF05636">
    <property type="entry name" value="HIGH_NTase1"/>
    <property type="match status" value="1"/>
</dbReference>
<dbReference type="SUPFAM" id="SSF52374">
    <property type="entry name" value="Nucleotidylyl transferase"/>
    <property type="match status" value="1"/>
</dbReference>